<proteinExistence type="evidence at protein level"/>
<sequence length="278" mass="31458">MKLVVCSESDTAGQNIKDNLLTFADFEEKDVGEFKLYLSDEFYIAETKERLIYADHIDEKLAKYIDFEEILFASRHSSKDGRKIFTVHVSGNVGTADFGGKPYSLAKPSPQTMKNYVLALRERLDRKPEFEFTMEVTHHGPSEISKPSAFYEIGSTEEEWKDREAAEVVAEAMLDAIRAEKMDWNVAVGVGGTHYAPRQTEIMLTTTFTFGHNFAKYTFEHLTAEFLVKAVKLSEAEYIIIDEKSVNSAVKKIVNEAAEVAGVEVLKSKKVKKDFRLV</sequence>
<gene>
    <name evidence="1" type="primary">dtdA</name>
    <name type="ordered locus">AF_0625</name>
</gene>
<comment type="function">
    <text evidence="1">D-aminoacyl-tRNA deacylase with broad substrate specificity. By recycling D-aminoacyl-tRNA to D-amino acids and free tRNA molecules, this enzyme counteracts the toxicity associated with the formation of D-aminoacyl-tRNA entities in vivo.</text>
</comment>
<comment type="catalytic activity">
    <reaction evidence="1">
        <text>a D-aminoacyl-tRNA + H2O = a tRNA + a D-alpha-amino acid + H(+)</text>
        <dbReference type="Rhea" id="RHEA:13953"/>
        <dbReference type="Rhea" id="RHEA-COMP:10123"/>
        <dbReference type="Rhea" id="RHEA-COMP:10124"/>
        <dbReference type="ChEBI" id="CHEBI:15377"/>
        <dbReference type="ChEBI" id="CHEBI:15378"/>
        <dbReference type="ChEBI" id="CHEBI:59871"/>
        <dbReference type="ChEBI" id="CHEBI:78442"/>
        <dbReference type="ChEBI" id="CHEBI:79333"/>
        <dbReference type="EC" id="3.1.1.96"/>
    </reaction>
</comment>
<comment type="catalytic activity">
    <reaction evidence="1">
        <text>glycyl-tRNA(Ala) + H2O = tRNA(Ala) + glycine + H(+)</text>
        <dbReference type="Rhea" id="RHEA:53744"/>
        <dbReference type="Rhea" id="RHEA-COMP:9657"/>
        <dbReference type="Rhea" id="RHEA-COMP:13640"/>
        <dbReference type="ChEBI" id="CHEBI:15377"/>
        <dbReference type="ChEBI" id="CHEBI:15378"/>
        <dbReference type="ChEBI" id="CHEBI:57305"/>
        <dbReference type="ChEBI" id="CHEBI:78442"/>
        <dbReference type="ChEBI" id="CHEBI:78522"/>
        <dbReference type="EC" id="3.1.1.96"/>
    </reaction>
</comment>
<comment type="cofactor">
    <cofactor evidence="1 2">
        <name>Zn(2+)</name>
        <dbReference type="ChEBI" id="CHEBI:29105"/>
    </cofactor>
    <text evidence="1 2">Binds 2 Zn(2+) ions per subunit.</text>
</comment>
<comment type="subunit">
    <text evidence="1">Monomer.</text>
</comment>
<comment type="similarity">
    <text evidence="1">Belongs to the DtdA deacylase family.</text>
</comment>
<name>DTDA_ARCFU</name>
<protein>
    <recommendedName>
        <fullName evidence="1">D-aminoacyl-tRNA deacylase</fullName>
        <ecNumber evidence="1">3.1.1.96</ecNumber>
    </recommendedName>
    <alternativeName>
        <fullName>D-tyrosyl-tRNA(Tyr) deacylase</fullName>
    </alternativeName>
</protein>
<accession>O29630</accession>
<evidence type="ECO:0000255" key="1">
    <source>
        <dbReference type="HAMAP-Rule" id="MF_00562"/>
    </source>
</evidence>
<evidence type="ECO:0000269" key="2">
    <source>
    </source>
</evidence>
<evidence type="ECO:0007829" key="3">
    <source>
        <dbReference type="PDB" id="1YQE"/>
    </source>
</evidence>
<organism>
    <name type="scientific">Archaeoglobus fulgidus (strain ATCC 49558 / DSM 4304 / JCM 9628 / NBRC 100126 / VC-16)</name>
    <dbReference type="NCBI Taxonomy" id="224325"/>
    <lineage>
        <taxon>Archaea</taxon>
        <taxon>Methanobacteriati</taxon>
        <taxon>Methanobacteriota</taxon>
        <taxon>Archaeoglobi</taxon>
        <taxon>Archaeoglobales</taxon>
        <taxon>Archaeoglobaceae</taxon>
        <taxon>Archaeoglobus</taxon>
    </lineage>
</organism>
<feature type="chain" id="PRO_0000158964" description="D-aminoacyl-tRNA deacylase">
    <location>
        <begin position="1"/>
        <end position="278"/>
    </location>
</feature>
<feature type="strand" evidence="3">
    <location>
        <begin position="2"/>
        <end position="7"/>
    </location>
</feature>
<feature type="helix" evidence="3">
    <location>
        <begin position="11"/>
        <end position="20"/>
    </location>
</feature>
<feature type="strand" evidence="3">
    <location>
        <begin position="27"/>
        <end position="31"/>
    </location>
</feature>
<feature type="strand" evidence="3">
    <location>
        <begin position="34"/>
        <end position="38"/>
    </location>
</feature>
<feature type="strand" evidence="3">
    <location>
        <begin position="43"/>
        <end position="49"/>
    </location>
</feature>
<feature type="helix" evidence="3">
    <location>
        <begin position="51"/>
        <end position="53"/>
    </location>
</feature>
<feature type="helix" evidence="3">
    <location>
        <begin position="57"/>
        <end position="61"/>
    </location>
</feature>
<feature type="turn" evidence="3">
    <location>
        <begin position="62"/>
        <end position="64"/>
    </location>
</feature>
<feature type="strand" evidence="3">
    <location>
        <begin position="68"/>
        <end position="77"/>
    </location>
</feature>
<feature type="strand" evidence="3">
    <location>
        <begin position="84"/>
        <end position="88"/>
    </location>
</feature>
<feature type="helix" evidence="3">
    <location>
        <begin position="110"/>
        <end position="121"/>
    </location>
</feature>
<feature type="helix" evidence="3">
    <location>
        <begin position="122"/>
        <end position="126"/>
    </location>
</feature>
<feature type="strand" evidence="3">
    <location>
        <begin position="131"/>
        <end position="134"/>
    </location>
</feature>
<feature type="strand" evidence="3">
    <location>
        <begin position="148"/>
        <end position="156"/>
    </location>
</feature>
<feature type="helix" evidence="3">
    <location>
        <begin position="157"/>
        <end position="160"/>
    </location>
</feature>
<feature type="helix" evidence="3">
    <location>
        <begin position="163"/>
        <end position="178"/>
    </location>
</feature>
<feature type="strand" evidence="3">
    <location>
        <begin position="185"/>
        <end position="190"/>
    </location>
</feature>
<feature type="helix" evidence="3">
    <location>
        <begin position="197"/>
        <end position="205"/>
    </location>
</feature>
<feature type="strand" evidence="3">
    <location>
        <begin position="206"/>
        <end position="214"/>
    </location>
</feature>
<feature type="helix" evidence="3">
    <location>
        <begin position="216"/>
        <end position="221"/>
    </location>
</feature>
<feature type="helix" evidence="3">
    <location>
        <begin position="224"/>
        <end position="234"/>
    </location>
</feature>
<feature type="strand" evidence="3">
    <location>
        <begin position="237"/>
        <end position="241"/>
    </location>
</feature>
<feature type="turn" evidence="3">
    <location>
        <begin position="243"/>
        <end position="245"/>
    </location>
</feature>
<feature type="helix" evidence="3">
    <location>
        <begin position="248"/>
        <end position="261"/>
    </location>
</feature>
<feature type="strand" evidence="3">
    <location>
        <begin position="264"/>
        <end position="267"/>
    </location>
</feature>
<feature type="helix" evidence="3">
    <location>
        <begin position="268"/>
        <end position="274"/>
    </location>
</feature>
<keyword id="KW-0002">3D-structure</keyword>
<keyword id="KW-0378">Hydrolase</keyword>
<keyword id="KW-0479">Metal-binding</keyword>
<keyword id="KW-1185">Reference proteome</keyword>
<keyword id="KW-0862">Zinc</keyword>
<reference key="1">
    <citation type="journal article" date="1997" name="Nature">
        <title>The complete genome sequence of the hyperthermophilic, sulphate-reducing archaeon Archaeoglobus fulgidus.</title>
        <authorList>
            <person name="Klenk H.-P."/>
            <person name="Clayton R.A."/>
            <person name="Tomb J.-F."/>
            <person name="White O."/>
            <person name="Nelson K.E."/>
            <person name="Ketchum K.A."/>
            <person name="Dodson R.J."/>
            <person name="Gwinn M.L."/>
            <person name="Hickey E.K."/>
            <person name="Peterson J.D."/>
            <person name="Richardson D.L."/>
            <person name="Kerlavage A.R."/>
            <person name="Graham D.E."/>
            <person name="Kyrpides N.C."/>
            <person name="Fleischmann R.D."/>
            <person name="Quackenbush J."/>
            <person name="Lee N.H."/>
            <person name="Sutton G.G."/>
            <person name="Gill S.R."/>
            <person name="Kirkness E.F."/>
            <person name="Dougherty B.A."/>
            <person name="McKenney K."/>
            <person name="Adams M.D."/>
            <person name="Loftus B.J."/>
            <person name="Peterson S.N."/>
            <person name="Reich C.I."/>
            <person name="McNeil L.K."/>
            <person name="Badger J.H."/>
            <person name="Glodek A."/>
            <person name="Zhou L."/>
            <person name="Overbeek R."/>
            <person name="Gocayne J.D."/>
            <person name="Weidman J.F."/>
            <person name="McDonald L.A."/>
            <person name="Utterback T.R."/>
            <person name="Cotton M.D."/>
            <person name="Spriggs T."/>
            <person name="Artiach P."/>
            <person name="Kaine B.P."/>
            <person name="Sykes S.M."/>
            <person name="Sadow P.W."/>
            <person name="D'Andrea K.P."/>
            <person name="Bowman C."/>
            <person name="Fujii C."/>
            <person name="Garland S.A."/>
            <person name="Mason T.M."/>
            <person name="Olsen G.J."/>
            <person name="Fraser C.M."/>
            <person name="Smith H.O."/>
            <person name="Woese C.R."/>
            <person name="Venter J.C."/>
        </authorList>
    </citation>
    <scope>NUCLEOTIDE SEQUENCE [LARGE SCALE GENOMIC DNA]</scope>
    <source>
        <strain>ATCC 49558 / DSM 4304 / JCM 9628 / NBRC 100126 / VC-16</strain>
    </source>
</reference>
<reference key="2">
    <citation type="journal article" date="2006" name="J. Biol. Chem.">
        <title>Identification in archaea of a novel D-Tyr-tRNATyr deacylase.</title>
        <authorList>
            <person name="Ferri-Fioni M.-L."/>
            <person name="Fromant M."/>
            <person name="Bouin A.-P."/>
            <person name="Aubard C."/>
            <person name="Lazennec C."/>
            <person name="Plateau P."/>
            <person name="Blanquet S."/>
        </authorList>
    </citation>
    <scope>COFACTOR</scope>
</reference>
<reference key="3">
    <citation type="submission" date="2005-04" db="PDB data bank">
        <title>Crystal structure of conserved hypothetical protein AF0625.</title>
        <authorList>
            <consortium name="Midwest center for structural genomics (MCSG)"/>
        </authorList>
    </citation>
    <scope>X-RAY CRYSTALLOGRAPHY (1.83 ANGSTROMS)</scope>
</reference>
<dbReference type="EC" id="3.1.1.96" evidence="1"/>
<dbReference type="EMBL" id="AE000782">
    <property type="protein sequence ID" value="AAB90614.1"/>
    <property type="molecule type" value="Genomic_DNA"/>
</dbReference>
<dbReference type="PIR" id="A69328">
    <property type="entry name" value="A69328"/>
</dbReference>
<dbReference type="RefSeq" id="WP_010878129.1">
    <property type="nucleotide sequence ID" value="NC_000917.1"/>
</dbReference>
<dbReference type="PDB" id="1YQE">
    <property type="method" value="X-ray"/>
    <property type="resolution" value="1.83 A"/>
    <property type="chains" value="A=1-278"/>
</dbReference>
<dbReference type="PDBsum" id="1YQE"/>
<dbReference type="SMR" id="O29630"/>
<dbReference type="STRING" id="224325.AF_0625"/>
<dbReference type="PaxDb" id="224325-AF_0625"/>
<dbReference type="EnsemblBacteria" id="AAB90614">
    <property type="protein sequence ID" value="AAB90614"/>
    <property type="gene ID" value="AF_0625"/>
</dbReference>
<dbReference type="KEGG" id="afu:AF_0625"/>
<dbReference type="eggNOG" id="arCOG01616">
    <property type="taxonomic scope" value="Archaea"/>
</dbReference>
<dbReference type="HOGENOM" id="CLU_056464_1_0_2"/>
<dbReference type="OrthoDB" id="9863at2157"/>
<dbReference type="PhylomeDB" id="O29630"/>
<dbReference type="BRENDA" id="3.1.1.96">
    <property type="organism ID" value="414"/>
</dbReference>
<dbReference type="EvolutionaryTrace" id="O29630"/>
<dbReference type="Proteomes" id="UP000002199">
    <property type="component" value="Chromosome"/>
</dbReference>
<dbReference type="GO" id="GO:0051499">
    <property type="term" value="F:D-aminoacyl-tRNA deacylase activity"/>
    <property type="evidence" value="ECO:0007669"/>
    <property type="project" value="UniProtKB-UniRule"/>
</dbReference>
<dbReference type="GO" id="GO:0008270">
    <property type="term" value="F:zinc ion binding"/>
    <property type="evidence" value="ECO:0007669"/>
    <property type="project" value="UniProtKB-UniRule"/>
</dbReference>
<dbReference type="GO" id="GO:0019478">
    <property type="term" value="P:D-amino acid catabolic process"/>
    <property type="evidence" value="ECO:0007669"/>
    <property type="project" value="UniProtKB-UniRule"/>
</dbReference>
<dbReference type="Gene3D" id="3.40.50.10700">
    <property type="entry name" value="AF0625-like"/>
    <property type="match status" value="1"/>
</dbReference>
<dbReference type="Gene3D" id="3.40.630.50">
    <property type="entry name" value="AF0625-like"/>
    <property type="match status" value="1"/>
</dbReference>
<dbReference type="HAMAP" id="MF_00562">
    <property type="entry name" value="Deacylase_DtdA"/>
    <property type="match status" value="1"/>
</dbReference>
<dbReference type="InterPro" id="IPR018033">
    <property type="entry name" value="Deacylase_DtdA_archaea"/>
</dbReference>
<dbReference type="InterPro" id="IPR007508">
    <property type="entry name" value="DtdA"/>
</dbReference>
<dbReference type="NCBIfam" id="NF003072">
    <property type="entry name" value="PRK03995.1-4"/>
    <property type="match status" value="1"/>
</dbReference>
<dbReference type="PANTHER" id="PTHR34667">
    <property type="entry name" value="D-AMINOACYL-TRNA DEACYLASE"/>
    <property type="match status" value="1"/>
</dbReference>
<dbReference type="PANTHER" id="PTHR34667:SF1">
    <property type="entry name" value="D-AMINOACYL-TRNA DEACYLASE"/>
    <property type="match status" value="1"/>
</dbReference>
<dbReference type="Pfam" id="PF04414">
    <property type="entry name" value="tRNA_deacylase"/>
    <property type="match status" value="1"/>
</dbReference>
<dbReference type="PIRSF" id="PIRSF016210">
    <property type="entry name" value="UCP016210"/>
    <property type="match status" value="1"/>
</dbReference>
<dbReference type="SUPFAM" id="SSF142535">
    <property type="entry name" value="AF0625-like"/>
    <property type="match status" value="1"/>
</dbReference>